<dbReference type="EMBL" id="AF507975">
    <property type="protein sequence ID" value="AAN64750.1"/>
    <property type="molecule type" value="mRNA"/>
</dbReference>
<dbReference type="PDB" id="1N4N">
    <property type="method" value="NMR"/>
    <property type="chains" value="A=26-72"/>
</dbReference>
<dbReference type="PDBsum" id="1N4N"/>
<dbReference type="SMR" id="Q8H6Q1"/>
<dbReference type="EvolutionaryTrace" id="Q8H6Q1"/>
<dbReference type="GO" id="GO:0005576">
    <property type="term" value="C:extracellular region"/>
    <property type="evidence" value="ECO:0007669"/>
    <property type="project" value="UniProtKB-SubCell"/>
</dbReference>
<dbReference type="GO" id="GO:0005773">
    <property type="term" value="C:vacuole"/>
    <property type="evidence" value="ECO:0007669"/>
    <property type="project" value="UniProtKB-SubCell"/>
</dbReference>
<dbReference type="GO" id="GO:0050832">
    <property type="term" value="P:defense response to fungus"/>
    <property type="evidence" value="ECO:0007669"/>
    <property type="project" value="UniProtKB-KW"/>
</dbReference>
<dbReference type="GO" id="GO:0031640">
    <property type="term" value="P:killing of cells of another organism"/>
    <property type="evidence" value="ECO:0007669"/>
    <property type="project" value="UniProtKB-KW"/>
</dbReference>
<dbReference type="CDD" id="cd00107">
    <property type="entry name" value="Knot1"/>
    <property type="match status" value="1"/>
</dbReference>
<dbReference type="Gene3D" id="3.30.30.10">
    <property type="entry name" value="Knottin, scorpion toxin-like"/>
    <property type="match status" value="1"/>
</dbReference>
<dbReference type="InterPro" id="IPR003614">
    <property type="entry name" value="Scorpion_toxin-like"/>
</dbReference>
<dbReference type="InterPro" id="IPR036574">
    <property type="entry name" value="Scorpion_toxin-like_sf"/>
</dbReference>
<dbReference type="Pfam" id="PF00304">
    <property type="entry name" value="Gamma-thionin"/>
    <property type="match status" value="1"/>
</dbReference>
<dbReference type="SUPFAM" id="SSF57095">
    <property type="entry name" value="Scorpion toxin-like"/>
    <property type="match status" value="1"/>
</dbReference>
<organism>
    <name type="scientific">Petunia hybrida</name>
    <name type="common">Petunia</name>
    <dbReference type="NCBI Taxonomy" id="4102"/>
    <lineage>
        <taxon>Eukaryota</taxon>
        <taxon>Viridiplantae</taxon>
        <taxon>Streptophyta</taxon>
        <taxon>Embryophyta</taxon>
        <taxon>Tracheophyta</taxon>
        <taxon>Spermatophyta</taxon>
        <taxon>Magnoliopsida</taxon>
        <taxon>eudicotyledons</taxon>
        <taxon>Gunneridae</taxon>
        <taxon>Pentapetalae</taxon>
        <taxon>asterids</taxon>
        <taxon>lamiids</taxon>
        <taxon>Solanales</taxon>
        <taxon>Solanaceae</taxon>
        <taxon>Petunioideae</taxon>
        <taxon>Petunia</taxon>
    </lineage>
</organism>
<sequence length="103" mass="11361">MARSICFFAVAILALMLFAAYDAEAATCKAECPTWDSVCINKKPCVACCKKAKFSDGHCSKILRRCLCTKECVFEKTEATQTETFTKDVNTLAEALLEADMMV</sequence>
<protein>
    <recommendedName>
        <fullName>Floral defensin-like protein 1</fullName>
    </recommendedName>
    <alternativeName>
        <fullName>PhD1</fullName>
    </alternativeName>
</protein>
<accession>Q8H6Q1</accession>
<proteinExistence type="evidence at protein level"/>
<evidence type="ECO:0000250" key="1"/>
<evidence type="ECO:0000269" key="2">
    <source>
    </source>
</evidence>
<evidence type="ECO:0000305" key="3"/>
<evidence type="ECO:0007829" key="4">
    <source>
        <dbReference type="PDB" id="1N4N"/>
    </source>
</evidence>
<reference key="1">
    <citation type="journal article" date="2003" name="Plant Physiol.">
        <title>Isolation and properties of floral defensins from ornamental tobacco and petunia.</title>
        <authorList>
            <person name="Lay F.T."/>
            <person name="Brugliera F."/>
            <person name="Anderson M.A."/>
        </authorList>
    </citation>
    <scope>NUCLEOTIDE SEQUENCE [MRNA]</scope>
    <scope>PROTEIN SEQUENCE OF 26-33</scope>
    <source>
        <strain>cv. Old Glory Blue</strain>
    </source>
</reference>
<reference key="2">
    <citation type="journal article" date="2003" name="Biochemistry">
        <title>Structure of Petunia hybrida defensin 1, a novel plant defensin with five disulfide bonds.</title>
        <authorList>
            <person name="Janssen B.-J."/>
            <person name="Schirra H.J."/>
            <person name="Lay F.T."/>
            <person name="Anderson M.A."/>
            <person name="Craik D.J."/>
        </authorList>
    </citation>
    <scope>STRUCTURE BY NMR OF 26-72</scope>
</reference>
<comment type="function">
    <text>Plant defense peptide with antifungal activity against F.oxysporum and B.cinerea.</text>
</comment>
<comment type="biophysicochemical properties">
    <phDependence>
        <text>Stable under extremes of pH.</text>
    </phDependence>
    <temperatureDependence>
        <text>Stable under extremes of temperature.</text>
    </temperatureDependence>
</comment>
<comment type="subcellular location">
    <subcellularLocation>
        <location evidence="1">Secreted</location>
    </subcellularLocation>
    <subcellularLocation>
        <location evidence="1">Vacuole</location>
    </subcellularLocation>
</comment>
<comment type="tissue specificity">
    <text>Petals.</text>
</comment>
<comment type="domain">
    <text>The presence of a 'disulfide through disulfide knot' structurally defines this protein as a knottin.</text>
</comment>
<comment type="PTM">
    <text>When compared to other plant defensins, the petunia defensins have an additional fifth disulfide bond.</text>
</comment>
<comment type="similarity">
    <text evidence="3">Belongs to the DEFL family.</text>
</comment>
<keyword id="KW-0002">3D-structure</keyword>
<keyword id="KW-0929">Antimicrobial</keyword>
<keyword id="KW-0903">Direct protein sequencing</keyword>
<keyword id="KW-1015">Disulfide bond</keyword>
<keyword id="KW-0295">Fungicide</keyword>
<keyword id="KW-0960">Knottin</keyword>
<keyword id="KW-0611">Plant defense</keyword>
<keyword id="KW-0964">Secreted</keyword>
<keyword id="KW-0732">Signal</keyword>
<keyword id="KW-0926">Vacuole</keyword>
<gene>
    <name type="primary">D1</name>
</gene>
<feature type="signal peptide" evidence="2">
    <location>
        <begin position="1"/>
        <end position="25"/>
    </location>
</feature>
<feature type="chain" id="PRO_0000007047" description="Floral defensin-like protein 1">
    <location>
        <begin position="26"/>
        <end position="72"/>
    </location>
</feature>
<feature type="propeptide" id="PRO_0000007048" description="Removed in mature form">
    <location>
        <begin position="73"/>
        <end position="103"/>
    </location>
</feature>
<feature type="disulfide bond">
    <location>
        <begin position="28"/>
        <end position="72"/>
    </location>
</feature>
<feature type="disulfide bond">
    <location>
        <begin position="32"/>
        <end position="48"/>
    </location>
</feature>
<feature type="disulfide bond">
    <location>
        <begin position="39"/>
        <end position="59"/>
    </location>
</feature>
<feature type="disulfide bond">
    <location>
        <begin position="45"/>
        <end position="66"/>
    </location>
</feature>
<feature type="disulfide bond">
    <location>
        <begin position="49"/>
        <end position="68"/>
    </location>
</feature>
<feature type="strand" evidence="4">
    <location>
        <begin position="28"/>
        <end position="31"/>
    </location>
</feature>
<feature type="helix" evidence="4">
    <location>
        <begin position="42"/>
        <end position="51"/>
    </location>
</feature>
<feature type="strand" evidence="4">
    <location>
        <begin position="55"/>
        <end position="59"/>
    </location>
</feature>
<feature type="strand" evidence="4">
    <location>
        <begin position="61"/>
        <end position="63"/>
    </location>
</feature>
<feature type="strand" evidence="4">
    <location>
        <begin position="66"/>
        <end position="70"/>
    </location>
</feature>
<name>DEF1_PETHY</name>